<protein>
    <recommendedName>
        <fullName evidence="1">Diaminopimelate epimerase</fullName>
        <shortName evidence="1">DAP epimerase</shortName>
        <ecNumber evidence="1">5.1.1.7</ecNumber>
    </recommendedName>
    <alternativeName>
        <fullName evidence="1">PLP-independent amino acid racemase</fullName>
    </alternativeName>
</protein>
<keyword id="KW-0028">Amino-acid biosynthesis</keyword>
<keyword id="KW-0963">Cytoplasm</keyword>
<keyword id="KW-0413">Isomerase</keyword>
<keyword id="KW-0457">Lysine biosynthesis</keyword>
<gene>
    <name evidence="1" type="primary">dapF</name>
    <name type="ordered locus">EcolC_4198</name>
</gene>
<name>DAPF_ECOLC</name>
<organism>
    <name type="scientific">Escherichia coli (strain ATCC 8739 / DSM 1576 / NBRC 3972 / NCIMB 8545 / WDCM 00012 / Crooks)</name>
    <dbReference type="NCBI Taxonomy" id="481805"/>
    <lineage>
        <taxon>Bacteria</taxon>
        <taxon>Pseudomonadati</taxon>
        <taxon>Pseudomonadota</taxon>
        <taxon>Gammaproteobacteria</taxon>
        <taxon>Enterobacterales</taxon>
        <taxon>Enterobacteriaceae</taxon>
        <taxon>Escherichia</taxon>
    </lineage>
</organism>
<accession>B1IW95</accession>
<proteinExistence type="inferred from homology"/>
<comment type="function">
    <text evidence="1">Catalyzes the stereoinversion of LL-2,6-diaminopimelate (L,L-DAP) to meso-diaminopimelate (meso-DAP), a precursor of L-lysine and an essential component of the bacterial peptidoglycan.</text>
</comment>
<comment type="catalytic activity">
    <reaction evidence="1">
        <text>(2S,6S)-2,6-diaminopimelate = meso-2,6-diaminopimelate</text>
        <dbReference type="Rhea" id="RHEA:15393"/>
        <dbReference type="ChEBI" id="CHEBI:57609"/>
        <dbReference type="ChEBI" id="CHEBI:57791"/>
        <dbReference type="EC" id="5.1.1.7"/>
    </reaction>
</comment>
<comment type="pathway">
    <text evidence="1">Amino-acid biosynthesis; L-lysine biosynthesis via DAP pathway; DL-2,6-diaminopimelate from LL-2,6-diaminopimelate: step 1/1.</text>
</comment>
<comment type="subunit">
    <text evidence="1">Homodimer.</text>
</comment>
<comment type="subcellular location">
    <subcellularLocation>
        <location evidence="1">Cytoplasm</location>
    </subcellularLocation>
</comment>
<comment type="similarity">
    <text evidence="1">Belongs to the diaminopimelate epimerase family.</text>
</comment>
<sequence length="274" mass="30209">MQFSKMHGLGNDFMVVDAVTQNVFFSPELIRRLADRHLGVGFDQLLVVEPPYDPELDFHYRIFNADGSEVAQCGNGARCFARFVRLKGLTNKRDIRVSTANGRMVLTVTDDDLVRVNMGEPNFEPSAVPFRANKAEKTYIMRAAEQTILCGVVSMGNPHCVIQVDDVDTAAVETLGPVLESHERFPERANIGFMQVVKREHIRLRVYERGAGETQACGSGACAAVAVGIQQGLLAEEVRVELPGGRLDIAWKGPGHPLYMTGPAVHVYDGFIHL</sequence>
<evidence type="ECO:0000255" key="1">
    <source>
        <dbReference type="HAMAP-Rule" id="MF_00197"/>
    </source>
</evidence>
<feature type="chain" id="PRO_1000077697" description="Diaminopimelate epimerase">
    <location>
        <begin position="1"/>
        <end position="274"/>
    </location>
</feature>
<feature type="active site" description="Proton donor" evidence="1">
    <location>
        <position position="73"/>
    </location>
</feature>
<feature type="active site" description="Proton acceptor" evidence="1">
    <location>
        <position position="217"/>
    </location>
</feature>
<feature type="binding site" evidence="1">
    <location>
        <position position="11"/>
    </location>
    <ligand>
        <name>substrate</name>
    </ligand>
</feature>
<feature type="binding site" evidence="1">
    <location>
        <position position="44"/>
    </location>
    <ligand>
        <name>substrate</name>
    </ligand>
</feature>
<feature type="binding site" evidence="1">
    <location>
        <position position="64"/>
    </location>
    <ligand>
        <name>substrate</name>
    </ligand>
</feature>
<feature type="binding site" evidence="1">
    <location>
        <begin position="74"/>
        <end position="75"/>
    </location>
    <ligand>
        <name>substrate</name>
    </ligand>
</feature>
<feature type="binding site" evidence="1">
    <location>
        <position position="157"/>
    </location>
    <ligand>
        <name>substrate</name>
    </ligand>
</feature>
<feature type="binding site" evidence="1">
    <location>
        <position position="190"/>
    </location>
    <ligand>
        <name>substrate</name>
    </ligand>
</feature>
<feature type="binding site" evidence="1">
    <location>
        <begin position="208"/>
        <end position="209"/>
    </location>
    <ligand>
        <name>substrate</name>
    </ligand>
</feature>
<feature type="binding site" evidence="1">
    <location>
        <begin position="218"/>
        <end position="219"/>
    </location>
    <ligand>
        <name>substrate</name>
    </ligand>
</feature>
<feature type="site" description="Could be important to modulate the pK values of the two catalytic cysteine residues" evidence="1">
    <location>
        <position position="159"/>
    </location>
</feature>
<feature type="site" description="Could be important to modulate the pK values of the two catalytic cysteine residues" evidence="1">
    <location>
        <position position="208"/>
    </location>
</feature>
<feature type="site" description="Important for dimerization" evidence="1">
    <location>
        <position position="268"/>
    </location>
</feature>
<dbReference type="EC" id="5.1.1.7" evidence="1"/>
<dbReference type="EMBL" id="CP000946">
    <property type="protein sequence ID" value="ACA79795.1"/>
    <property type="molecule type" value="Genomic_DNA"/>
</dbReference>
<dbReference type="RefSeq" id="WP_001160654.1">
    <property type="nucleotide sequence ID" value="NZ_MTFT01000015.1"/>
</dbReference>
<dbReference type="SMR" id="B1IW95"/>
<dbReference type="GeneID" id="93778134"/>
<dbReference type="KEGG" id="ecl:EcolC_4198"/>
<dbReference type="HOGENOM" id="CLU_053306_1_1_6"/>
<dbReference type="UniPathway" id="UPA00034">
    <property type="reaction ID" value="UER00025"/>
</dbReference>
<dbReference type="GO" id="GO:0005829">
    <property type="term" value="C:cytosol"/>
    <property type="evidence" value="ECO:0007669"/>
    <property type="project" value="TreeGrafter"/>
</dbReference>
<dbReference type="GO" id="GO:0008837">
    <property type="term" value="F:diaminopimelate epimerase activity"/>
    <property type="evidence" value="ECO:0007669"/>
    <property type="project" value="UniProtKB-UniRule"/>
</dbReference>
<dbReference type="GO" id="GO:0009089">
    <property type="term" value="P:lysine biosynthetic process via diaminopimelate"/>
    <property type="evidence" value="ECO:0007669"/>
    <property type="project" value="UniProtKB-UniRule"/>
</dbReference>
<dbReference type="FunFam" id="3.10.310.10:FF:000001">
    <property type="entry name" value="Diaminopimelate epimerase"/>
    <property type="match status" value="1"/>
</dbReference>
<dbReference type="FunFam" id="3.10.310.10:FF:000002">
    <property type="entry name" value="Diaminopimelate epimerase"/>
    <property type="match status" value="1"/>
</dbReference>
<dbReference type="Gene3D" id="3.10.310.10">
    <property type="entry name" value="Diaminopimelate Epimerase, Chain A, domain 1"/>
    <property type="match status" value="2"/>
</dbReference>
<dbReference type="HAMAP" id="MF_00197">
    <property type="entry name" value="DAP_epimerase"/>
    <property type="match status" value="1"/>
</dbReference>
<dbReference type="InterPro" id="IPR018510">
    <property type="entry name" value="DAP_epimerase_AS"/>
</dbReference>
<dbReference type="InterPro" id="IPR001653">
    <property type="entry name" value="DAP_epimerase_DapF"/>
</dbReference>
<dbReference type="NCBIfam" id="TIGR00652">
    <property type="entry name" value="DapF"/>
    <property type="match status" value="1"/>
</dbReference>
<dbReference type="PANTHER" id="PTHR31689:SF0">
    <property type="entry name" value="DIAMINOPIMELATE EPIMERASE"/>
    <property type="match status" value="1"/>
</dbReference>
<dbReference type="PANTHER" id="PTHR31689">
    <property type="entry name" value="DIAMINOPIMELATE EPIMERASE, CHLOROPLASTIC"/>
    <property type="match status" value="1"/>
</dbReference>
<dbReference type="Pfam" id="PF01678">
    <property type="entry name" value="DAP_epimerase"/>
    <property type="match status" value="2"/>
</dbReference>
<dbReference type="SUPFAM" id="SSF54506">
    <property type="entry name" value="Diaminopimelate epimerase-like"/>
    <property type="match status" value="1"/>
</dbReference>
<dbReference type="PROSITE" id="PS01326">
    <property type="entry name" value="DAP_EPIMERASE"/>
    <property type="match status" value="1"/>
</dbReference>
<reference key="1">
    <citation type="submission" date="2008-02" db="EMBL/GenBank/DDBJ databases">
        <title>Complete sequence of Escherichia coli C str. ATCC 8739.</title>
        <authorList>
            <person name="Copeland A."/>
            <person name="Lucas S."/>
            <person name="Lapidus A."/>
            <person name="Glavina del Rio T."/>
            <person name="Dalin E."/>
            <person name="Tice H."/>
            <person name="Bruce D."/>
            <person name="Goodwin L."/>
            <person name="Pitluck S."/>
            <person name="Kiss H."/>
            <person name="Brettin T."/>
            <person name="Detter J.C."/>
            <person name="Han C."/>
            <person name="Kuske C.R."/>
            <person name="Schmutz J."/>
            <person name="Larimer F."/>
            <person name="Land M."/>
            <person name="Hauser L."/>
            <person name="Kyrpides N."/>
            <person name="Mikhailova N."/>
            <person name="Ingram L."/>
            <person name="Richardson P."/>
        </authorList>
    </citation>
    <scope>NUCLEOTIDE SEQUENCE [LARGE SCALE GENOMIC DNA]</scope>
    <source>
        <strain>ATCC 8739 / DSM 1576 / NBRC 3972 / NCIMB 8545 / WDCM 00012 / Crooks</strain>
    </source>
</reference>